<feature type="signal peptide" evidence="2">
    <location>
        <begin position="1"/>
        <end position="29"/>
    </location>
</feature>
<feature type="propeptide" id="PRO_0000025926" description="Activation peptide" evidence="1">
    <location>
        <begin position="30"/>
        <end position="70"/>
    </location>
</feature>
<feature type="chain" id="PRO_0000025927" description="Aspergillopepsin-1">
    <location>
        <begin position="71"/>
        <end position="395"/>
    </location>
</feature>
<feature type="domain" description="Peptidase A1" evidence="3">
    <location>
        <begin position="86"/>
        <end position="392"/>
    </location>
</feature>
<feature type="active site" evidence="3">
    <location>
        <position position="102"/>
    </location>
</feature>
<feature type="active site" evidence="3">
    <location>
        <position position="284"/>
    </location>
</feature>
<feature type="disulfide bond" evidence="3">
    <location>
        <begin position="320"/>
        <end position="355"/>
    </location>
</feature>
<feature type="sequence conflict" description="In Ref. 1; AAB07619." evidence="6" ref="1">
    <original>SAVPVVQPR</original>
    <variation>MLSLWSSRA</variation>
    <location>
        <begin position="19"/>
        <end position="27"/>
    </location>
</feature>
<feature type="sequence conflict" description="In Ref. 1; AAB07619." evidence="6" ref="1">
    <original>NQ</original>
    <variation>FL</variation>
    <location>
        <begin position="33"/>
        <end position="34"/>
    </location>
</feature>
<feature type="sequence conflict" description="In Ref. 1; AAB07619." evidence="6" ref="1">
    <original>V</original>
    <variation>G</variation>
    <location>
        <position position="154"/>
    </location>
</feature>
<feature type="sequence conflict" description="In Ref. 1; AAB07619." evidence="6" ref="1">
    <original>RPQTTFFD</original>
    <variation>SDYFLY</variation>
    <location>
        <begin position="204"/>
        <end position="211"/>
    </location>
</feature>
<feature type="sequence conflict" description="In Ref. 1; AAB07619." evidence="6" ref="1">
    <original>S</original>
    <variation>T</variation>
    <location>
        <position position="276"/>
    </location>
</feature>
<feature type="sequence conflict" description="In Ref. 1; AAB07619." evidence="6" ref="1">
    <original>VTDGSSTCYGGI</original>
    <variation>SLTQLYLLRRH</variation>
    <location>
        <begin position="348"/>
        <end position="359"/>
    </location>
</feature>
<feature type="sequence conflict" description="In Ref. 1." evidence="6" ref="1">
    <original>PQA</original>
    <variation>LRH</variation>
    <location>
        <begin position="393"/>
        <end position="395"/>
    </location>
</feature>
<proteinExistence type="evidence at protein level"/>
<protein>
    <recommendedName>
        <fullName evidence="6">Aspergillopepsin-1</fullName>
        <ecNumber evidence="4">3.4.23.18</ecNumber>
    </recommendedName>
    <alternativeName>
        <fullName>Aspartic protease pepA</fullName>
    </alternativeName>
    <alternativeName>
        <fullName evidence="5">Aspergillopepsin F</fullName>
    </alternativeName>
    <alternativeName>
        <fullName>Aspergillopepsin I</fullName>
    </alternativeName>
    <alternativeName>
        <fullName>Aspergillopeptidase A</fullName>
    </alternativeName>
</protein>
<comment type="function">
    <text evidence="1 4">Secreted aspartic endopeptidase that allows assimilation of proteinaceous substrates. The scissile peptide bond is attacked by a nucleophilic water molecule activated by two aspartic residues in the active site. Shows a broad primary substrate specificity. Favors hydrophobic residues at the P1 and P1' positions, but also accepts a lysine residue in the P1 position, leading to the activation of trypsinogen and chymotrypsinogen A (By similarity). Can catalyze hydrolysis of the major structural proteins of basement membrane, elastin, collagen, and laminin. Thought to play a significant role in virulence (PubMed:7558282).</text>
</comment>
<comment type="catalytic activity">
    <reaction evidence="4">
        <text>Hydrolysis of proteins with broad specificity. Generally favors hydrophobic residues in P1 and P1', but also accepts Lys in P1, which leads to activation of trypsinogen. Does not clot milk.</text>
        <dbReference type="EC" id="3.4.23.18"/>
    </reaction>
</comment>
<comment type="biophysicochemical properties">
    <phDependence>
        <text evidence="4">Optimum pH is 5.0.</text>
    </phDependence>
</comment>
<comment type="subcellular location">
    <subcellularLocation>
        <location evidence="4">Secreted</location>
    </subcellularLocation>
</comment>
<comment type="similarity">
    <text evidence="3">Belongs to the peptidase A1 family.</text>
</comment>
<dbReference type="EC" id="3.4.23.18" evidence="4"/>
<dbReference type="EMBL" id="L31490">
    <property type="protein sequence ID" value="AAB07619.1"/>
    <property type="molecule type" value="Genomic_DNA"/>
</dbReference>
<dbReference type="EMBL" id="X85092">
    <property type="protein sequence ID" value="CAA59419.1"/>
    <property type="molecule type" value="Genomic_DNA"/>
</dbReference>
<dbReference type="EMBL" id="AAHF01000003">
    <property type="protein sequence ID" value="EAL91286.1"/>
    <property type="molecule type" value="Genomic_DNA"/>
</dbReference>
<dbReference type="RefSeq" id="XP_753324.1">
    <property type="nucleotide sequence ID" value="XM_748231.1"/>
</dbReference>
<dbReference type="SMR" id="P41748"/>
<dbReference type="STRING" id="330879.P41748"/>
<dbReference type="Allergome" id="3108">
    <property type="allergen name" value="Asp f 10.0101"/>
</dbReference>
<dbReference type="Allergome" id="63">
    <property type="allergen name" value="Asp f 10"/>
</dbReference>
<dbReference type="MEROPS" id="A01.026"/>
<dbReference type="EnsemblFungi" id="EAL91286">
    <property type="protein sequence ID" value="EAL91286"/>
    <property type="gene ID" value="AFUA_5G13300"/>
</dbReference>
<dbReference type="GeneID" id="3510846"/>
<dbReference type="KEGG" id="afm:AFUA_5G13300"/>
<dbReference type="VEuPathDB" id="FungiDB:Afu5g13300"/>
<dbReference type="eggNOG" id="KOG1339">
    <property type="taxonomic scope" value="Eukaryota"/>
</dbReference>
<dbReference type="HOGENOM" id="CLU_013253_0_1_1"/>
<dbReference type="InParanoid" id="P41748"/>
<dbReference type="OMA" id="TKATFDW"/>
<dbReference type="OrthoDB" id="2747330at2759"/>
<dbReference type="Proteomes" id="UP000002530">
    <property type="component" value="Chromosome 5"/>
</dbReference>
<dbReference type="GO" id="GO:0005576">
    <property type="term" value="C:extracellular region"/>
    <property type="evidence" value="ECO:0000314"/>
    <property type="project" value="AspGD"/>
</dbReference>
<dbReference type="GO" id="GO:0004190">
    <property type="term" value="F:aspartic-type endopeptidase activity"/>
    <property type="evidence" value="ECO:0000318"/>
    <property type="project" value="GO_Central"/>
</dbReference>
<dbReference type="GO" id="GO:0004175">
    <property type="term" value="F:endopeptidase activity"/>
    <property type="evidence" value="ECO:0000314"/>
    <property type="project" value="AspGD"/>
</dbReference>
<dbReference type="GO" id="GO:0006508">
    <property type="term" value="P:proteolysis"/>
    <property type="evidence" value="ECO:0000315"/>
    <property type="project" value="AspGD"/>
</dbReference>
<dbReference type="CDD" id="cd06097">
    <property type="entry name" value="Aspergillopepsin_like"/>
    <property type="match status" value="1"/>
</dbReference>
<dbReference type="FunFam" id="2.40.70.10:FF:000024">
    <property type="entry name" value="Endothiapepsin"/>
    <property type="match status" value="1"/>
</dbReference>
<dbReference type="FunFam" id="2.40.70.10:FF:000026">
    <property type="entry name" value="Endothiapepsin"/>
    <property type="match status" value="1"/>
</dbReference>
<dbReference type="Gene3D" id="2.40.70.10">
    <property type="entry name" value="Acid Proteases"/>
    <property type="match status" value="2"/>
</dbReference>
<dbReference type="InterPro" id="IPR001461">
    <property type="entry name" value="Aspartic_peptidase_A1"/>
</dbReference>
<dbReference type="InterPro" id="IPR001969">
    <property type="entry name" value="Aspartic_peptidase_AS"/>
</dbReference>
<dbReference type="InterPro" id="IPR034163">
    <property type="entry name" value="Aspergillopepsin-like_cat_dom"/>
</dbReference>
<dbReference type="InterPro" id="IPR033121">
    <property type="entry name" value="PEPTIDASE_A1"/>
</dbReference>
<dbReference type="InterPro" id="IPR021109">
    <property type="entry name" value="Peptidase_aspartic_dom_sf"/>
</dbReference>
<dbReference type="PANTHER" id="PTHR47966:SF2">
    <property type="entry name" value="ASPERGILLOPEPSIN-1-RELATED"/>
    <property type="match status" value="1"/>
</dbReference>
<dbReference type="PANTHER" id="PTHR47966">
    <property type="entry name" value="BETA-SITE APP-CLEAVING ENZYME, ISOFORM A-RELATED"/>
    <property type="match status" value="1"/>
</dbReference>
<dbReference type="Pfam" id="PF00026">
    <property type="entry name" value="Asp"/>
    <property type="match status" value="1"/>
</dbReference>
<dbReference type="PRINTS" id="PR00792">
    <property type="entry name" value="PEPSIN"/>
</dbReference>
<dbReference type="SUPFAM" id="SSF50630">
    <property type="entry name" value="Acid proteases"/>
    <property type="match status" value="1"/>
</dbReference>
<dbReference type="PROSITE" id="PS00141">
    <property type="entry name" value="ASP_PROTEASE"/>
    <property type="match status" value="2"/>
</dbReference>
<dbReference type="PROSITE" id="PS51767">
    <property type="entry name" value="PEPTIDASE_A1"/>
    <property type="match status" value="1"/>
</dbReference>
<evidence type="ECO:0000250" key="1">
    <source>
        <dbReference type="UniProtKB" id="Q12567"/>
    </source>
</evidence>
<evidence type="ECO:0000255" key="2"/>
<evidence type="ECO:0000255" key="3">
    <source>
        <dbReference type="PROSITE-ProRule" id="PRU01103"/>
    </source>
</evidence>
<evidence type="ECO:0000269" key="4">
    <source>
    </source>
</evidence>
<evidence type="ECO:0000303" key="5">
    <source>
    </source>
</evidence>
<evidence type="ECO:0000305" key="6"/>
<keyword id="KW-0064">Aspartyl protease</keyword>
<keyword id="KW-1015">Disulfide bond</keyword>
<keyword id="KW-0378">Hydrolase</keyword>
<keyword id="KW-0645">Protease</keyword>
<keyword id="KW-1185">Reference proteome</keyword>
<keyword id="KW-0964">Secreted</keyword>
<keyword id="KW-0732">Signal</keyword>
<keyword id="KW-0843">Virulence</keyword>
<keyword id="KW-0865">Zymogen</keyword>
<accession>P41748</accession>
<accession>Q12547</accession>
<accession>Q4WVU0</accession>
<sequence length="395" mass="41613">MVVFSKVTAVVVGLSTIVSAVPVVQPRKGFTINQVARPVTNKKTVNLPAVYANALTKYGGTVPDSVKAAASSGSAVTTPEQYDSEYLTPVKVGGTTLNLDFDTGSADLWVFSSELSASQSSGHAIYKPSANAQKLNGYTWKIQYGDGSSASGDVYKDTVTVGGVTAQSQAVEAASHISSQFVQDKDNDGLLGLAFSSINTVSPRPQTTFFDTVKSQLDSPLFAVTLKYHAPGTYDFGYIDNSKFQGELTYTDVDSSQGFWMFTADGYGVGNGAPNSNSISGIADTGTTLLLLDDSVVADYYRQVSGAKNSNQYGGYVFPCSTKLPSFTTVIGGYNAVVPGEYINYAPVTDGSSTCYGGIQSNSGLGFSIFGDIFLKSQYVVFDSQGPRLGFAPQA</sequence>
<organism>
    <name type="scientific">Aspergillus fumigatus (strain ATCC MYA-4609 / CBS 101355 / FGSC A1100 / Af293)</name>
    <name type="common">Neosartorya fumigata</name>
    <dbReference type="NCBI Taxonomy" id="330879"/>
    <lineage>
        <taxon>Eukaryota</taxon>
        <taxon>Fungi</taxon>
        <taxon>Dikarya</taxon>
        <taxon>Ascomycota</taxon>
        <taxon>Pezizomycotina</taxon>
        <taxon>Eurotiomycetes</taxon>
        <taxon>Eurotiomycetidae</taxon>
        <taxon>Eurotiales</taxon>
        <taxon>Aspergillaceae</taxon>
        <taxon>Aspergillus</taxon>
        <taxon>Aspergillus subgen. Fumigati</taxon>
    </lineage>
</organism>
<reference key="1">
    <citation type="journal article" date="1995" name="Infect. Immun.">
        <title>Molecular cloning of the cDNA and gene for an elastinolytic aspartic proteinase from Aspergillus fumigatus and evidence of its secretion by the fungus during invasion of the host lung.</title>
        <authorList>
            <person name="Lee J.D."/>
            <person name="Kolattukudy P.E."/>
        </authorList>
    </citation>
    <scope>NUCLEOTIDE SEQUENCE [GENOMIC DNA]</scope>
    <scope>FUNCTION</scope>
    <scope>CATALYTIC ACTIVITY</scope>
    <scope>BIOPHYSICOCHEMICAL PROPERTIES</scope>
    <scope>SUBCELLULAR LOCATION</scope>
</reference>
<reference key="2">
    <citation type="journal article" date="1995" name="FEMS Microbiol. Lett.">
        <title>Molecular cloning and sequencing of the gene encoding an extracellular aspartic proteinase from Aspergillus fumigatus.</title>
        <authorList>
            <person name="Reichard U."/>
            <person name="Monod M."/>
            <person name="Ruechel R."/>
        </authorList>
    </citation>
    <scope>NUCLEOTIDE SEQUENCE [GENOMIC DNA]</scope>
    <source>
        <strain>D141</strain>
    </source>
</reference>
<reference key="3">
    <citation type="journal article" date="2005" name="Nature">
        <title>Genomic sequence of the pathogenic and allergenic filamentous fungus Aspergillus fumigatus.</title>
        <authorList>
            <person name="Nierman W.C."/>
            <person name="Pain A."/>
            <person name="Anderson M.J."/>
            <person name="Wortman J.R."/>
            <person name="Kim H.S."/>
            <person name="Arroyo J."/>
            <person name="Berriman M."/>
            <person name="Abe K."/>
            <person name="Archer D.B."/>
            <person name="Bermejo C."/>
            <person name="Bennett J.W."/>
            <person name="Bowyer P."/>
            <person name="Chen D."/>
            <person name="Collins M."/>
            <person name="Coulsen R."/>
            <person name="Davies R."/>
            <person name="Dyer P.S."/>
            <person name="Farman M.L."/>
            <person name="Fedorova N."/>
            <person name="Fedorova N.D."/>
            <person name="Feldblyum T.V."/>
            <person name="Fischer R."/>
            <person name="Fosker N."/>
            <person name="Fraser A."/>
            <person name="Garcia J.L."/>
            <person name="Garcia M.J."/>
            <person name="Goble A."/>
            <person name="Goldman G.H."/>
            <person name="Gomi K."/>
            <person name="Griffith-Jones S."/>
            <person name="Gwilliam R."/>
            <person name="Haas B.J."/>
            <person name="Haas H."/>
            <person name="Harris D.E."/>
            <person name="Horiuchi H."/>
            <person name="Huang J."/>
            <person name="Humphray S."/>
            <person name="Jimenez J."/>
            <person name="Keller N."/>
            <person name="Khouri H."/>
            <person name="Kitamoto K."/>
            <person name="Kobayashi T."/>
            <person name="Konzack S."/>
            <person name="Kulkarni R."/>
            <person name="Kumagai T."/>
            <person name="Lafton A."/>
            <person name="Latge J.-P."/>
            <person name="Li W."/>
            <person name="Lord A."/>
            <person name="Lu C."/>
            <person name="Majoros W.H."/>
            <person name="May G.S."/>
            <person name="Miller B.L."/>
            <person name="Mohamoud Y."/>
            <person name="Molina M."/>
            <person name="Monod M."/>
            <person name="Mouyna I."/>
            <person name="Mulligan S."/>
            <person name="Murphy L.D."/>
            <person name="O'Neil S."/>
            <person name="Paulsen I."/>
            <person name="Penalva M.A."/>
            <person name="Pertea M."/>
            <person name="Price C."/>
            <person name="Pritchard B.L."/>
            <person name="Quail M.A."/>
            <person name="Rabbinowitsch E."/>
            <person name="Rawlins N."/>
            <person name="Rajandream M.A."/>
            <person name="Reichard U."/>
            <person name="Renauld H."/>
            <person name="Robson G.D."/>
            <person name="Rodriguez de Cordoba S."/>
            <person name="Rodriguez-Pena J.M."/>
            <person name="Ronning C.M."/>
            <person name="Rutter S."/>
            <person name="Salzberg S.L."/>
            <person name="Sanchez M."/>
            <person name="Sanchez-Ferrero J.C."/>
            <person name="Saunders D."/>
            <person name="Seeger K."/>
            <person name="Squares R."/>
            <person name="Squares S."/>
            <person name="Takeuchi M."/>
            <person name="Tekaia F."/>
            <person name="Turner G."/>
            <person name="Vazquez de Aldana C.R."/>
            <person name="Weidman J."/>
            <person name="White O."/>
            <person name="Woodward J.R."/>
            <person name="Yu J.-H."/>
            <person name="Fraser C.M."/>
            <person name="Galagan J.E."/>
            <person name="Asai K."/>
            <person name="Machida M."/>
            <person name="Hall N."/>
            <person name="Barrell B.G."/>
            <person name="Denning D.W."/>
        </authorList>
    </citation>
    <scope>NUCLEOTIDE SEQUENCE [LARGE SCALE GENOMIC DNA]</scope>
    <source>
        <strain>ATCC MYA-4609 / CBS 101355 / FGSC A1100 / Af293</strain>
    </source>
</reference>
<gene>
    <name type="primary">pepA</name>
    <name type="ORF">AFUA_5G13300</name>
</gene>
<name>PEPA_ASPFU</name>